<name>JIP5_CRYNJ</name>
<evidence type="ECO:0000250" key="1"/>
<evidence type="ECO:0000255" key="2"/>
<evidence type="ECO:0000256" key="3">
    <source>
        <dbReference type="SAM" id="MobiDB-lite"/>
    </source>
</evidence>
<evidence type="ECO:0000305" key="4"/>
<protein>
    <recommendedName>
        <fullName>WD repeat-containing protein JIP5</fullName>
    </recommendedName>
</protein>
<accession>P0CS40</accession>
<accession>Q55ZY2</accession>
<accession>Q5KP90</accession>
<sequence>MPDIKLKNQPFDVAFHPKEPVVFSSLLTGQVCAWSYDDATGETSSSWSVRPSKRTARALSIEENGDEIWMGGKSGSLFQLSTRDGSMTRERDSAHECPINRVYCVNRNLVATGDDDGVIKLWDPRQADSIRTYSQHFDYISDFTYFDDKRQLVATSGDGHLSVIDIRSNKSTPLTVSEDQEDELLSIVPIKGGQKAIVGSGLGILSVWNRQMGWADSVDRIPGHPASIDAIVALTPDIIATGSEDGMIRVIQVLPHKFLGVVATHEEFPVERIRLDRNNKWLGSVSHDECLKLTDVEDLFEDSDEDDEMEEDEPDSDEEKSKKKKKDNGMKDMSRGQAENDGSFFADL</sequence>
<dbReference type="EMBL" id="AE017341">
    <property type="protein sequence ID" value="AAW40894.2"/>
    <property type="molecule type" value="Genomic_DNA"/>
</dbReference>
<dbReference type="RefSeq" id="XP_566713.1">
    <property type="nucleotide sequence ID" value="XM_566713.1"/>
</dbReference>
<dbReference type="SMR" id="P0CS40"/>
<dbReference type="FunCoup" id="P0CS40">
    <property type="interactions" value="468"/>
</dbReference>
<dbReference type="STRING" id="214684.P0CS40"/>
<dbReference type="PaxDb" id="214684-P0CS40"/>
<dbReference type="eggNOG" id="KOG2444">
    <property type="taxonomic scope" value="Eukaryota"/>
</dbReference>
<dbReference type="HOGENOM" id="CLU_035848_2_1_1"/>
<dbReference type="InParanoid" id="P0CS40"/>
<dbReference type="Proteomes" id="UP000002149">
    <property type="component" value="Chromosome 1"/>
</dbReference>
<dbReference type="GO" id="GO:0005730">
    <property type="term" value="C:nucleolus"/>
    <property type="evidence" value="ECO:0007669"/>
    <property type="project" value="UniProtKB-SubCell"/>
</dbReference>
<dbReference type="FunFam" id="2.130.10.10:FF:001600">
    <property type="entry name" value="WD repeat-containing protein JIP5"/>
    <property type="match status" value="1"/>
</dbReference>
<dbReference type="Gene3D" id="2.130.10.10">
    <property type="entry name" value="YVTN repeat-like/Quinoprotein amine dehydrogenase"/>
    <property type="match status" value="2"/>
</dbReference>
<dbReference type="InterPro" id="IPR015943">
    <property type="entry name" value="WD40/YVTN_repeat-like_dom_sf"/>
</dbReference>
<dbReference type="InterPro" id="IPR036322">
    <property type="entry name" value="WD40_repeat_dom_sf"/>
</dbReference>
<dbReference type="InterPro" id="IPR001680">
    <property type="entry name" value="WD40_rpt"/>
</dbReference>
<dbReference type="InterPro" id="IPR017422">
    <property type="entry name" value="WDR55"/>
</dbReference>
<dbReference type="InterPro" id="IPR050505">
    <property type="entry name" value="WDR55_POC1"/>
</dbReference>
<dbReference type="PANTHER" id="PTHR44019">
    <property type="entry name" value="WD REPEAT-CONTAINING PROTEIN 55"/>
    <property type="match status" value="1"/>
</dbReference>
<dbReference type="PANTHER" id="PTHR44019:SF20">
    <property type="entry name" value="WD REPEAT-CONTAINING PROTEIN 55"/>
    <property type="match status" value="1"/>
</dbReference>
<dbReference type="Pfam" id="PF24796">
    <property type="entry name" value="WDR55"/>
    <property type="match status" value="1"/>
</dbReference>
<dbReference type="PIRSF" id="PIRSF038169">
    <property type="entry name" value="WD_repeat_p55"/>
    <property type="match status" value="1"/>
</dbReference>
<dbReference type="SMART" id="SM00320">
    <property type="entry name" value="WD40"/>
    <property type="match status" value="5"/>
</dbReference>
<dbReference type="SUPFAM" id="SSF50978">
    <property type="entry name" value="WD40 repeat-like"/>
    <property type="match status" value="1"/>
</dbReference>
<dbReference type="PROSITE" id="PS50082">
    <property type="entry name" value="WD_REPEATS_2"/>
    <property type="match status" value="1"/>
</dbReference>
<dbReference type="PROSITE" id="PS50294">
    <property type="entry name" value="WD_REPEATS_REGION"/>
    <property type="match status" value="1"/>
</dbReference>
<organism>
    <name type="scientific">Cryptococcus neoformans var. neoformans serotype D (strain JEC21 / ATCC MYA-565)</name>
    <name type="common">Filobasidiella neoformans</name>
    <dbReference type="NCBI Taxonomy" id="214684"/>
    <lineage>
        <taxon>Eukaryota</taxon>
        <taxon>Fungi</taxon>
        <taxon>Dikarya</taxon>
        <taxon>Basidiomycota</taxon>
        <taxon>Agaricomycotina</taxon>
        <taxon>Tremellomycetes</taxon>
        <taxon>Tremellales</taxon>
        <taxon>Cryptococcaceae</taxon>
        <taxon>Cryptococcus</taxon>
        <taxon>Cryptococcus neoformans species complex</taxon>
    </lineage>
</organism>
<reference key="1">
    <citation type="journal article" date="2005" name="Science">
        <title>The genome of the basidiomycetous yeast and human pathogen Cryptococcus neoformans.</title>
        <authorList>
            <person name="Loftus B.J."/>
            <person name="Fung E."/>
            <person name="Roncaglia P."/>
            <person name="Rowley D."/>
            <person name="Amedeo P."/>
            <person name="Bruno D."/>
            <person name="Vamathevan J."/>
            <person name="Miranda M."/>
            <person name="Anderson I.J."/>
            <person name="Fraser J.A."/>
            <person name="Allen J.E."/>
            <person name="Bosdet I.E."/>
            <person name="Brent M.R."/>
            <person name="Chiu R."/>
            <person name="Doering T.L."/>
            <person name="Donlin M.J."/>
            <person name="D'Souza C.A."/>
            <person name="Fox D.S."/>
            <person name="Grinberg V."/>
            <person name="Fu J."/>
            <person name="Fukushima M."/>
            <person name="Haas B.J."/>
            <person name="Huang J.C."/>
            <person name="Janbon G."/>
            <person name="Jones S.J.M."/>
            <person name="Koo H.L."/>
            <person name="Krzywinski M.I."/>
            <person name="Kwon-Chung K.J."/>
            <person name="Lengeler K.B."/>
            <person name="Maiti R."/>
            <person name="Marra M.A."/>
            <person name="Marra R.E."/>
            <person name="Mathewson C.A."/>
            <person name="Mitchell T.G."/>
            <person name="Pertea M."/>
            <person name="Riggs F.R."/>
            <person name="Salzberg S.L."/>
            <person name="Schein J.E."/>
            <person name="Shvartsbeyn A."/>
            <person name="Shin H."/>
            <person name="Shumway M."/>
            <person name="Specht C.A."/>
            <person name="Suh B.B."/>
            <person name="Tenney A."/>
            <person name="Utterback T.R."/>
            <person name="Wickes B.L."/>
            <person name="Wortman J.R."/>
            <person name="Wye N.H."/>
            <person name="Kronstad J.W."/>
            <person name="Lodge J.K."/>
            <person name="Heitman J."/>
            <person name="Davis R.W."/>
            <person name="Fraser C.M."/>
            <person name="Hyman R.W."/>
        </authorList>
    </citation>
    <scope>NUCLEOTIDE SEQUENCE [LARGE SCALE GENOMIC DNA]</scope>
    <source>
        <strain>JEC21 / ATCC MYA-565</strain>
    </source>
</reference>
<gene>
    <name type="primary">JIP5</name>
    <name type="ordered locus">CNA03780</name>
</gene>
<proteinExistence type="inferred from homology"/>
<feature type="chain" id="PRO_0000333557" description="WD repeat-containing protein JIP5">
    <location>
        <begin position="1"/>
        <end position="348"/>
    </location>
</feature>
<feature type="repeat" description="WD 1" evidence="2">
    <location>
        <begin position="5"/>
        <end position="44"/>
    </location>
</feature>
<feature type="repeat" description="WD 2" evidence="2">
    <location>
        <begin position="51"/>
        <end position="90"/>
    </location>
</feature>
<feature type="repeat" description="WD 3" evidence="2">
    <location>
        <begin position="94"/>
        <end position="132"/>
    </location>
</feature>
<feature type="repeat" description="WD 4" evidence="2">
    <location>
        <begin position="135"/>
        <end position="174"/>
    </location>
</feature>
<feature type="repeat" description="WD 5" evidence="2">
    <location>
        <begin position="179"/>
        <end position="218"/>
    </location>
</feature>
<feature type="repeat" description="WD 6" evidence="2">
    <location>
        <begin position="223"/>
        <end position="261"/>
    </location>
</feature>
<feature type="repeat" description="WD 7" evidence="2">
    <location>
        <begin position="264"/>
        <end position="304"/>
    </location>
</feature>
<feature type="region of interest" description="Disordered" evidence="3">
    <location>
        <begin position="299"/>
        <end position="348"/>
    </location>
</feature>
<feature type="compositionally biased region" description="Acidic residues" evidence="3">
    <location>
        <begin position="299"/>
        <end position="318"/>
    </location>
</feature>
<keyword id="KW-0539">Nucleus</keyword>
<keyword id="KW-1185">Reference proteome</keyword>
<keyword id="KW-0677">Repeat</keyword>
<keyword id="KW-0853">WD repeat</keyword>
<comment type="subcellular location">
    <subcellularLocation>
        <location evidence="1">Nucleus</location>
        <location evidence="1">Nucleolus</location>
    </subcellularLocation>
</comment>
<comment type="similarity">
    <text evidence="4">Belongs to the WD repeat WDR55 family.</text>
</comment>